<feature type="chain" id="PRO_1000066317" description="Orotate phosphoribosyltransferase">
    <location>
        <begin position="1"/>
        <end position="194"/>
    </location>
</feature>
<feature type="binding site" evidence="1">
    <location>
        <position position="102"/>
    </location>
    <ligand>
        <name>5-phospho-alpha-D-ribose 1-diphosphate</name>
        <dbReference type="ChEBI" id="CHEBI:58017"/>
        <note>ligand shared between dimeric partners</note>
    </ligand>
</feature>
<feature type="binding site" description="in other chain" evidence="1">
    <location>
        <position position="103"/>
    </location>
    <ligand>
        <name>5-phospho-alpha-D-ribose 1-diphosphate</name>
        <dbReference type="ChEBI" id="CHEBI:58017"/>
        <note>ligand shared between dimeric partners</note>
    </ligand>
</feature>
<feature type="binding site" evidence="1">
    <location>
        <position position="106"/>
    </location>
    <ligand>
        <name>5-phospho-alpha-D-ribose 1-diphosphate</name>
        <dbReference type="ChEBI" id="CHEBI:58017"/>
        <note>ligand shared between dimeric partners</note>
    </ligand>
</feature>
<feature type="binding site" evidence="1">
    <location>
        <position position="108"/>
    </location>
    <ligand>
        <name>5-phospho-alpha-D-ribose 1-diphosphate</name>
        <dbReference type="ChEBI" id="CHEBI:58017"/>
        <note>ligand shared between dimeric partners</note>
    </ligand>
</feature>
<feature type="binding site" description="in other chain" evidence="1">
    <location>
        <begin position="129"/>
        <end position="137"/>
    </location>
    <ligand>
        <name>5-phospho-alpha-D-ribose 1-diphosphate</name>
        <dbReference type="ChEBI" id="CHEBI:58017"/>
        <note>ligand shared between dimeric partners</note>
    </ligand>
</feature>
<feature type="binding site" evidence="1">
    <location>
        <position position="133"/>
    </location>
    <ligand>
        <name>orotate</name>
        <dbReference type="ChEBI" id="CHEBI:30839"/>
    </ligand>
</feature>
<feature type="binding site" evidence="1">
    <location>
        <position position="161"/>
    </location>
    <ligand>
        <name>orotate</name>
        <dbReference type="ChEBI" id="CHEBI:30839"/>
    </ligand>
</feature>
<comment type="function">
    <text evidence="1">Catalyzes the transfer of a ribosyl phosphate group from 5-phosphoribose 1-diphosphate to orotate, leading to the formation of orotidine monophosphate (OMP).</text>
</comment>
<comment type="catalytic activity">
    <reaction evidence="1">
        <text>orotidine 5'-phosphate + diphosphate = orotate + 5-phospho-alpha-D-ribose 1-diphosphate</text>
        <dbReference type="Rhea" id="RHEA:10380"/>
        <dbReference type="ChEBI" id="CHEBI:30839"/>
        <dbReference type="ChEBI" id="CHEBI:33019"/>
        <dbReference type="ChEBI" id="CHEBI:57538"/>
        <dbReference type="ChEBI" id="CHEBI:58017"/>
        <dbReference type="EC" id="2.4.2.10"/>
    </reaction>
</comment>
<comment type="cofactor">
    <cofactor evidence="1">
        <name>Mg(2+)</name>
        <dbReference type="ChEBI" id="CHEBI:18420"/>
    </cofactor>
</comment>
<comment type="pathway">
    <text evidence="1">Pyrimidine metabolism; UMP biosynthesis via de novo pathway; UMP from orotate: step 1/2.</text>
</comment>
<comment type="subunit">
    <text evidence="1">Homodimer.</text>
</comment>
<comment type="similarity">
    <text evidence="1">Belongs to the purine/pyrimidine phosphoribosyltransferase family. PyrE subfamily.</text>
</comment>
<evidence type="ECO:0000255" key="1">
    <source>
        <dbReference type="HAMAP-Rule" id="MF_01208"/>
    </source>
</evidence>
<protein>
    <recommendedName>
        <fullName evidence="1">Orotate phosphoribosyltransferase</fullName>
        <shortName evidence="1">OPRT</shortName>
        <shortName evidence="1">OPRTase</shortName>
        <ecNumber evidence="1">2.4.2.10</ecNumber>
    </recommendedName>
</protein>
<organism>
    <name type="scientific">Synechococcus sp. (strain CC9902)</name>
    <dbReference type="NCBI Taxonomy" id="316279"/>
    <lineage>
        <taxon>Bacteria</taxon>
        <taxon>Bacillati</taxon>
        <taxon>Cyanobacteriota</taxon>
        <taxon>Cyanophyceae</taxon>
        <taxon>Synechococcales</taxon>
        <taxon>Synechococcaceae</taxon>
        <taxon>Synechococcus</taxon>
    </lineage>
</organism>
<proteinExistence type="inferred from homology"/>
<gene>
    <name evidence="1" type="primary">pyrE</name>
    <name type="ordered locus">Syncc9902_0260</name>
</gene>
<accession>Q3B095</accession>
<keyword id="KW-0328">Glycosyltransferase</keyword>
<keyword id="KW-0460">Magnesium</keyword>
<keyword id="KW-0665">Pyrimidine biosynthesis</keyword>
<keyword id="KW-1185">Reference proteome</keyword>
<keyword id="KW-0808">Transferase</keyword>
<dbReference type="EC" id="2.4.2.10" evidence="1"/>
<dbReference type="EMBL" id="CP000097">
    <property type="protein sequence ID" value="ABB25233.1"/>
    <property type="molecule type" value="Genomic_DNA"/>
</dbReference>
<dbReference type="RefSeq" id="WP_011359094.1">
    <property type="nucleotide sequence ID" value="NC_007513.1"/>
</dbReference>
<dbReference type="SMR" id="Q3B095"/>
<dbReference type="STRING" id="316279.Syncc9902_0260"/>
<dbReference type="KEGG" id="sye:Syncc9902_0260"/>
<dbReference type="eggNOG" id="COG0461">
    <property type="taxonomic scope" value="Bacteria"/>
</dbReference>
<dbReference type="HOGENOM" id="CLU_074878_2_1_3"/>
<dbReference type="OrthoDB" id="9785917at2"/>
<dbReference type="UniPathway" id="UPA00070">
    <property type="reaction ID" value="UER00119"/>
</dbReference>
<dbReference type="Proteomes" id="UP000002712">
    <property type="component" value="Chromosome"/>
</dbReference>
<dbReference type="GO" id="GO:0000287">
    <property type="term" value="F:magnesium ion binding"/>
    <property type="evidence" value="ECO:0007669"/>
    <property type="project" value="UniProtKB-UniRule"/>
</dbReference>
<dbReference type="GO" id="GO:0004588">
    <property type="term" value="F:orotate phosphoribosyltransferase activity"/>
    <property type="evidence" value="ECO:0007669"/>
    <property type="project" value="UniProtKB-UniRule"/>
</dbReference>
<dbReference type="GO" id="GO:0044205">
    <property type="term" value="P:'de novo' UMP biosynthetic process"/>
    <property type="evidence" value="ECO:0007669"/>
    <property type="project" value="UniProtKB-UniRule"/>
</dbReference>
<dbReference type="GO" id="GO:0019856">
    <property type="term" value="P:pyrimidine nucleobase biosynthetic process"/>
    <property type="evidence" value="ECO:0007669"/>
    <property type="project" value="TreeGrafter"/>
</dbReference>
<dbReference type="CDD" id="cd06223">
    <property type="entry name" value="PRTases_typeI"/>
    <property type="match status" value="1"/>
</dbReference>
<dbReference type="Gene3D" id="3.40.50.2020">
    <property type="match status" value="1"/>
</dbReference>
<dbReference type="HAMAP" id="MF_01208">
    <property type="entry name" value="PyrE"/>
    <property type="match status" value="1"/>
</dbReference>
<dbReference type="InterPro" id="IPR023031">
    <property type="entry name" value="OPRT"/>
</dbReference>
<dbReference type="InterPro" id="IPR004467">
    <property type="entry name" value="Or_phspho_trans_dom"/>
</dbReference>
<dbReference type="InterPro" id="IPR000836">
    <property type="entry name" value="PRibTrfase_dom"/>
</dbReference>
<dbReference type="InterPro" id="IPR029057">
    <property type="entry name" value="PRTase-like"/>
</dbReference>
<dbReference type="NCBIfam" id="TIGR00336">
    <property type="entry name" value="pyrE"/>
    <property type="match status" value="1"/>
</dbReference>
<dbReference type="PANTHER" id="PTHR19278">
    <property type="entry name" value="OROTATE PHOSPHORIBOSYLTRANSFERASE"/>
    <property type="match status" value="1"/>
</dbReference>
<dbReference type="PANTHER" id="PTHR19278:SF9">
    <property type="entry name" value="URIDINE 5'-MONOPHOSPHATE SYNTHASE"/>
    <property type="match status" value="1"/>
</dbReference>
<dbReference type="SUPFAM" id="SSF53271">
    <property type="entry name" value="PRTase-like"/>
    <property type="match status" value="1"/>
</dbReference>
<sequence>MPTSPGLTEEQRSDLMRRLATSAYKRGNFTLASGRQSEHYVNCKPVSLSGTGLLLISTAMLSHVEDQSVAVAGLTLGADPLVSGVAVAGSLAHRDLDALIVRKAAKGHGTGAWLEGPLPQPGALITVLEDVVTTGGSSLKAVNQLREAGYVVNRVITIVDREEGGAAAMDAAELELISLFRLSEISAFAAELNQ</sequence>
<reference key="1">
    <citation type="submission" date="2005-08" db="EMBL/GenBank/DDBJ databases">
        <title>Complete sequence of Synechococcus sp. CC9902.</title>
        <authorList>
            <person name="Copeland A."/>
            <person name="Lucas S."/>
            <person name="Lapidus A."/>
            <person name="Barry K."/>
            <person name="Detter J.C."/>
            <person name="Glavina T."/>
            <person name="Hammon N."/>
            <person name="Israni S."/>
            <person name="Pitluck S."/>
            <person name="Martinez M."/>
            <person name="Schmutz J."/>
            <person name="Larimer F."/>
            <person name="Land M."/>
            <person name="Kyrpides N."/>
            <person name="Ivanova N."/>
            <person name="Richardson P."/>
        </authorList>
    </citation>
    <scope>NUCLEOTIDE SEQUENCE [LARGE SCALE GENOMIC DNA]</scope>
    <source>
        <strain>CC9902</strain>
    </source>
</reference>
<name>PYRE_SYNS9</name>